<sequence length="348" mass="38455">MSQYKTGLLLIHPAVTTTPELVENTKAQAASKKVKFVDQFLINKLNDGSITLENAKYETVHYLTPEAQTDIKFPKKLISVLADSLKPNGSLIGLSDIYKVDALINGFEIINEPDYCWIKMDSSKLNQTVSIPLKKKKTNNTKLQSGSKLPTFKKASSSTSNLPSFKKADHSRQPIVKETDSFKPPSFKMATEPKVYRVVDDLIEDSDDDDFSSDSSKAQYFDQVDTSDDSIEEEELIDEDGSGKSMITMITCGKSKTKKKKACKDCTCGMKEQEGKEINDIRSQQDKVVKFTEDELTEIDFTIDGKKVGGCGSCSLGDAFRCSGCPYLGLPAFKPGQPINLDSISDDL</sequence>
<accession>A7A031</accession>
<reference key="1">
    <citation type="journal article" date="2007" name="Proc. Natl. Acad. Sci. U.S.A.">
        <title>Genome sequencing and comparative analysis of Saccharomyces cerevisiae strain YJM789.</title>
        <authorList>
            <person name="Wei W."/>
            <person name="McCusker J.H."/>
            <person name="Hyman R.W."/>
            <person name="Jones T."/>
            <person name="Ning Y."/>
            <person name="Cao Z."/>
            <person name="Gu Z."/>
            <person name="Bruno D."/>
            <person name="Miranda M."/>
            <person name="Nguyen M."/>
            <person name="Wilhelmy J."/>
            <person name="Komp C."/>
            <person name="Tamse R."/>
            <person name="Wang X."/>
            <person name="Jia P."/>
            <person name="Luedi P."/>
            <person name="Oefner P.J."/>
            <person name="David L."/>
            <person name="Dietrich F.S."/>
            <person name="Li Y."/>
            <person name="Davis R.W."/>
            <person name="Steinmetz L.M."/>
        </authorList>
    </citation>
    <scope>NUCLEOTIDE SEQUENCE [LARGE SCALE GENOMIC DNA]</scope>
    <source>
        <strain>YJM789</strain>
    </source>
</reference>
<keyword id="KW-0001">2Fe-2S</keyword>
<keyword id="KW-0004">4Fe-4S</keyword>
<keyword id="KW-0963">Cytoplasm</keyword>
<keyword id="KW-0408">Iron</keyword>
<keyword id="KW-0411">Iron-sulfur</keyword>
<keyword id="KW-0479">Metal-binding</keyword>
<keyword id="KW-0496">Mitochondrion</keyword>
<keyword id="KW-0597">Phosphoprotein</keyword>
<dbReference type="EMBL" id="AAFW02000152">
    <property type="protein sequence ID" value="EDN59974.1"/>
    <property type="molecule type" value="Genomic_DNA"/>
</dbReference>
<dbReference type="BMRB" id="A7A031"/>
<dbReference type="SMR" id="A7A031"/>
<dbReference type="HOGENOM" id="CLU_067152_0_0_1"/>
<dbReference type="Proteomes" id="UP000007060">
    <property type="component" value="Unassembled WGS sequence"/>
</dbReference>
<dbReference type="GO" id="GO:0005758">
    <property type="term" value="C:mitochondrial intermembrane space"/>
    <property type="evidence" value="ECO:0007669"/>
    <property type="project" value="UniProtKB-SubCell"/>
</dbReference>
<dbReference type="GO" id="GO:0051537">
    <property type="term" value="F:2 iron, 2 sulfur cluster binding"/>
    <property type="evidence" value="ECO:0007669"/>
    <property type="project" value="UniProtKB-UniRule"/>
</dbReference>
<dbReference type="GO" id="GO:0051539">
    <property type="term" value="F:4 iron, 4 sulfur cluster binding"/>
    <property type="evidence" value="ECO:0007669"/>
    <property type="project" value="UniProtKB-KW"/>
</dbReference>
<dbReference type="GO" id="GO:0009055">
    <property type="term" value="F:electron transfer activity"/>
    <property type="evidence" value="ECO:0007669"/>
    <property type="project" value="UniProtKB-UniRule"/>
</dbReference>
<dbReference type="GO" id="GO:0046872">
    <property type="term" value="F:metal ion binding"/>
    <property type="evidence" value="ECO:0007669"/>
    <property type="project" value="UniProtKB-KW"/>
</dbReference>
<dbReference type="GO" id="GO:0016226">
    <property type="term" value="P:iron-sulfur cluster assembly"/>
    <property type="evidence" value="ECO:0007669"/>
    <property type="project" value="UniProtKB-UniRule"/>
</dbReference>
<dbReference type="FunFam" id="3.40.50.11000:FF:000001">
    <property type="entry name" value="Fe-S cluster assembly protein DRE2"/>
    <property type="match status" value="1"/>
</dbReference>
<dbReference type="Gene3D" id="3.40.50.11000">
    <property type="entry name" value="Fe-S cluster assembly protein Dre2, N-terminal domain"/>
    <property type="match status" value="1"/>
</dbReference>
<dbReference type="HAMAP" id="MF_03115">
    <property type="entry name" value="Anamorsin"/>
    <property type="match status" value="1"/>
</dbReference>
<dbReference type="InterPro" id="IPR007785">
    <property type="entry name" value="Anamorsin"/>
</dbReference>
<dbReference type="InterPro" id="IPR046408">
    <property type="entry name" value="CIAPIN1"/>
</dbReference>
<dbReference type="InterPro" id="IPR031838">
    <property type="entry name" value="Dre2_N"/>
</dbReference>
<dbReference type="PANTHER" id="PTHR13273">
    <property type="entry name" value="ANAMORSIN"/>
    <property type="match status" value="1"/>
</dbReference>
<dbReference type="PANTHER" id="PTHR13273:SF14">
    <property type="entry name" value="ANAMORSIN"/>
    <property type="match status" value="1"/>
</dbReference>
<dbReference type="Pfam" id="PF05093">
    <property type="entry name" value="CIAPIN1"/>
    <property type="match status" value="1"/>
</dbReference>
<dbReference type="Pfam" id="PF16803">
    <property type="entry name" value="DRE2_N"/>
    <property type="match status" value="1"/>
</dbReference>
<comment type="function">
    <text evidence="2">Component of the cytosolic iron-sulfur (Fe-S) protein assembly (CIA) machinery required for the maturation of extramitochondrial Fe-S proteins. Part of an electron transfer chain functioning in an early step of cytosolic Fe-S biogenesis, facilitating the de novo assembly of a [4Fe-4S] cluster on the scaffold complex CFD1-NBP35. Electrons are transferred to DRE2 from NADPH via the FAD- and FMN-containing protein TAH18. TAH18-DRE2 are also required for the assembly of the diferric tyrosyl radical cofactor of ribonucleotide reductase (RNR), probably by providing electrons for reduction during radical cofactor maturation in the catalytic small subunit RNR2.</text>
</comment>
<comment type="cofactor">
    <cofactor evidence="2">
        <name>[2Fe-2S] cluster</name>
        <dbReference type="ChEBI" id="CHEBI:190135"/>
    </cofactor>
</comment>
<comment type="cofactor">
    <cofactor evidence="2">
        <name>[4Fe-4S] cluster</name>
        <dbReference type="ChEBI" id="CHEBI:49883"/>
    </cofactor>
</comment>
<comment type="subunit">
    <text evidence="2">Monomer. Interacts with TAH18. Interacts with MIA40.</text>
</comment>
<comment type="subcellular location">
    <subcellularLocation>
        <location evidence="2">Cytoplasm</location>
    </subcellularLocation>
    <subcellularLocation>
        <location evidence="2">Mitochondrion intermembrane space</location>
    </subcellularLocation>
</comment>
<comment type="domain">
    <text evidence="2">The C-terminal domain binds 2 Fe-S clusters but is otherwise mostly in an intrinsically disordered conformation.</text>
</comment>
<comment type="domain">
    <text evidence="2">The N-terminal domain has structural similarity with S-adenosyl-L-methionine-dependent methyltransferases, but does not bind S-adenosyl-L-methionine. It is required for correct assembly of the 2 Fe-S clusters.</text>
</comment>
<comment type="domain">
    <text evidence="2">The twin Cx2C motifs are involved in the recognition by the mitochondrial MIA40-ERV1 disulfide relay system. The formation of 2 disulfide bonds in the Cx2C motifs through dithiol/disulfide exchange reactions effectively traps the protein in the mitochondrial intermembrane space.</text>
</comment>
<comment type="similarity">
    <text evidence="2">Belongs to the anamorsin family.</text>
</comment>
<name>DRE2_YEAS7</name>
<feature type="chain" id="PRO_0000324875" description="Fe-S cluster assembly protein DRE2">
    <location>
        <begin position="1"/>
        <end position="348"/>
    </location>
</feature>
<feature type="region of interest" description="N-terminal SAM-like domain" evidence="2">
    <location>
        <begin position="1"/>
        <end position="162"/>
    </location>
</feature>
<feature type="region of interest" description="Disordered" evidence="3">
    <location>
        <begin position="137"/>
        <end position="170"/>
    </location>
</feature>
<feature type="region of interest" description="Linker" evidence="2">
    <location>
        <begin position="163"/>
        <end position="242"/>
    </location>
</feature>
<feature type="region of interest" description="Fe-S binding site A" evidence="2">
    <location>
        <begin position="252"/>
        <end position="268"/>
    </location>
</feature>
<feature type="region of interest" description="Fe-S binding site B" evidence="2">
    <location>
        <begin position="311"/>
        <end position="325"/>
    </location>
</feature>
<feature type="short sequence motif" description="Cx2C motif 1" evidence="2">
    <location>
        <begin position="311"/>
        <end position="314"/>
    </location>
</feature>
<feature type="short sequence motif" description="Cx2C motif 2" evidence="2">
    <location>
        <begin position="322"/>
        <end position="325"/>
    </location>
</feature>
<feature type="compositionally biased region" description="Polar residues" evidence="3">
    <location>
        <begin position="144"/>
        <end position="163"/>
    </location>
</feature>
<feature type="binding site" evidence="2">
    <location>
        <position position="252"/>
    </location>
    <ligand>
        <name>[2Fe-2S] cluster</name>
        <dbReference type="ChEBI" id="CHEBI:190135"/>
    </ligand>
</feature>
<feature type="binding site" evidence="2">
    <location>
        <position position="263"/>
    </location>
    <ligand>
        <name>[2Fe-2S] cluster</name>
        <dbReference type="ChEBI" id="CHEBI:190135"/>
    </ligand>
</feature>
<feature type="binding site" evidence="2">
    <location>
        <position position="266"/>
    </location>
    <ligand>
        <name>[2Fe-2S] cluster</name>
        <dbReference type="ChEBI" id="CHEBI:190135"/>
    </ligand>
</feature>
<feature type="binding site" evidence="2">
    <location>
        <position position="268"/>
    </location>
    <ligand>
        <name>[2Fe-2S] cluster</name>
        <dbReference type="ChEBI" id="CHEBI:190135"/>
    </ligand>
</feature>
<feature type="binding site" evidence="2">
    <location>
        <position position="311"/>
    </location>
    <ligand>
        <name>[4Fe-4S] cluster</name>
        <dbReference type="ChEBI" id="CHEBI:49883"/>
    </ligand>
</feature>
<feature type="binding site" evidence="2">
    <location>
        <position position="314"/>
    </location>
    <ligand>
        <name>[4Fe-4S] cluster</name>
        <dbReference type="ChEBI" id="CHEBI:49883"/>
    </ligand>
</feature>
<feature type="binding site" evidence="2">
    <location>
        <position position="322"/>
    </location>
    <ligand>
        <name>[4Fe-4S] cluster</name>
        <dbReference type="ChEBI" id="CHEBI:49883"/>
    </ligand>
</feature>
<feature type="binding site" evidence="2">
    <location>
        <position position="325"/>
    </location>
    <ligand>
        <name>[4Fe-4S] cluster</name>
        <dbReference type="ChEBI" id="CHEBI:49883"/>
    </ligand>
</feature>
<feature type="modified residue" description="Phosphoserine" evidence="1">
    <location>
        <position position="206"/>
    </location>
</feature>
<proteinExistence type="inferred from homology"/>
<organism>
    <name type="scientific">Saccharomyces cerevisiae (strain YJM789)</name>
    <name type="common">Baker's yeast</name>
    <dbReference type="NCBI Taxonomy" id="307796"/>
    <lineage>
        <taxon>Eukaryota</taxon>
        <taxon>Fungi</taxon>
        <taxon>Dikarya</taxon>
        <taxon>Ascomycota</taxon>
        <taxon>Saccharomycotina</taxon>
        <taxon>Saccharomycetes</taxon>
        <taxon>Saccharomycetales</taxon>
        <taxon>Saccharomycetaceae</taxon>
        <taxon>Saccharomyces</taxon>
    </lineage>
</organism>
<gene>
    <name evidence="2" type="primary">DRE2</name>
    <name type="ORF">SCY_3441</name>
</gene>
<protein>
    <recommendedName>
        <fullName evidence="2">Fe-S cluster assembly protein DRE2</fullName>
    </recommendedName>
    <alternativeName>
        <fullName evidence="2">Anamorsin homolog</fullName>
    </alternativeName>
</protein>
<evidence type="ECO:0000250" key="1">
    <source>
        <dbReference type="UniProtKB" id="P36152"/>
    </source>
</evidence>
<evidence type="ECO:0000255" key="2">
    <source>
        <dbReference type="HAMAP-Rule" id="MF_03115"/>
    </source>
</evidence>
<evidence type="ECO:0000256" key="3">
    <source>
        <dbReference type="SAM" id="MobiDB-lite"/>
    </source>
</evidence>